<proteinExistence type="inferred from homology"/>
<evidence type="ECO:0000255" key="1">
    <source>
        <dbReference type="HAMAP-Rule" id="MF_00539"/>
    </source>
</evidence>
<evidence type="ECO:0000256" key="2">
    <source>
        <dbReference type="SAM" id="MobiDB-lite"/>
    </source>
</evidence>
<evidence type="ECO:0000305" key="3"/>
<protein>
    <recommendedName>
        <fullName evidence="1">Large ribosomal subunit protein bL27</fullName>
    </recommendedName>
    <alternativeName>
        <fullName evidence="3">50S ribosomal protein L27</fullName>
    </alternativeName>
</protein>
<name>RL27_TRIL1</name>
<accession>B3E330</accession>
<keyword id="KW-1185">Reference proteome</keyword>
<keyword id="KW-0687">Ribonucleoprotein</keyword>
<keyword id="KW-0689">Ribosomal protein</keyword>
<dbReference type="EMBL" id="CP001089">
    <property type="protein sequence ID" value="ACD97290.1"/>
    <property type="molecule type" value="Genomic_DNA"/>
</dbReference>
<dbReference type="RefSeq" id="WP_012471608.1">
    <property type="nucleotide sequence ID" value="NC_010814.1"/>
</dbReference>
<dbReference type="SMR" id="B3E330"/>
<dbReference type="STRING" id="398767.Glov_3589"/>
<dbReference type="KEGG" id="glo:Glov_3589"/>
<dbReference type="eggNOG" id="COG0211">
    <property type="taxonomic scope" value="Bacteria"/>
</dbReference>
<dbReference type="HOGENOM" id="CLU_095424_4_0_7"/>
<dbReference type="OrthoDB" id="9803474at2"/>
<dbReference type="Proteomes" id="UP000002420">
    <property type="component" value="Chromosome"/>
</dbReference>
<dbReference type="GO" id="GO:0022625">
    <property type="term" value="C:cytosolic large ribosomal subunit"/>
    <property type="evidence" value="ECO:0007669"/>
    <property type="project" value="TreeGrafter"/>
</dbReference>
<dbReference type="GO" id="GO:0003735">
    <property type="term" value="F:structural constituent of ribosome"/>
    <property type="evidence" value="ECO:0007669"/>
    <property type="project" value="InterPro"/>
</dbReference>
<dbReference type="GO" id="GO:0006412">
    <property type="term" value="P:translation"/>
    <property type="evidence" value="ECO:0007669"/>
    <property type="project" value="UniProtKB-UniRule"/>
</dbReference>
<dbReference type="FunFam" id="2.40.50.100:FF:000004">
    <property type="entry name" value="50S ribosomal protein L27"/>
    <property type="match status" value="1"/>
</dbReference>
<dbReference type="Gene3D" id="2.40.50.100">
    <property type="match status" value="1"/>
</dbReference>
<dbReference type="HAMAP" id="MF_00539">
    <property type="entry name" value="Ribosomal_bL27"/>
    <property type="match status" value="1"/>
</dbReference>
<dbReference type="InterPro" id="IPR001684">
    <property type="entry name" value="Ribosomal_bL27"/>
</dbReference>
<dbReference type="InterPro" id="IPR018261">
    <property type="entry name" value="Ribosomal_bL27_CS"/>
</dbReference>
<dbReference type="NCBIfam" id="TIGR00062">
    <property type="entry name" value="L27"/>
    <property type="match status" value="1"/>
</dbReference>
<dbReference type="PANTHER" id="PTHR15893:SF0">
    <property type="entry name" value="LARGE RIBOSOMAL SUBUNIT PROTEIN BL27M"/>
    <property type="match status" value="1"/>
</dbReference>
<dbReference type="PANTHER" id="PTHR15893">
    <property type="entry name" value="RIBOSOMAL PROTEIN L27"/>
    <property type="match status" value="1"/>
</dbReference>
<dbReference type="Pfam" id="PF01016">
    <property type="entry name" value="Ribosomal_L27"/>
    <property type="match status" value="1"/>
</dbReference>
<dbReference type="PRINTS" id="PR00063">
    <property type="entry name" value="RIBOSOMALL27"/>
</dbReference>
<dbReference type="SUPFAM" id="SSF110324">
    <property type="entry name" value="Ribosomal L27 protein-like"/>
    <property type="match status" value="1"/>
</dbReference>
<dbReference type="PROSITE" id="PS00831">
    <property type="entry name" value="RIBOSOMAL_L27"/>
    <property type="match status" value="1"/>
</dbReference>
<reference key="1">
    <citation type="submission" date="2008-05" db="EMBL/GenBank/DDBJ databases">
        <title>Complete sequence of chromosome of Geobacter lovleyi SZ.</title>
        <authorList>
            <consortium name="US DOE Joint Genome Institute"/>
            <person name="Lucas S."/>
            <person name="Copeland A."/>
            <person name="Lapidus A."/>
            <person name="Glavina del Rio T."/>
            <person name="Dalin E."/>
            <person name="Tice H."/>
            <person name="Bruce D."/>
            <person name="Goodwin L."/>
            <person name="Pitluck S."/>
            <person name="Chertkov O."/>
            <person name="Meincke L."/>
            <person name="Brettin T."/>
            <person name="Detter J.C."/>
            <person name="Han C."/>
            <person name="Tapia R."/>
            <person name="Kuske C.R."/>
            <person name="Schmutz J."/>
            <person name="Larimer F."/>
            <person name="Land M."/>
            <person name="Hauser L."/>
            <person name="Kyrpides N."/>
            <person name="Mikhailova N."/>
            <person name="Sung Y."/>
            <person name="Fletcher K.E."/>
            <person name="Ritalahti K.M."/>
            <person name="Loeffler F.E."/>
            <person name="Richardson P."/>
        </authorList>
    </citation>
    <scope>NUCLEOTIDE SEQUENCE [LARGE SCALE GENOMIC DNA]</scope>
    <source>
        <strain>ATCC BAA-1151 / DSM 17278 / SZ</strain>
    </source>
</reference>
<comment type="similarity">
    <text evidence="1">Belongs to the bacterial ribosomal protein bL27 family.</text>
</comment>
<gene>
    <name evidence="1" type="primary">rpmA</name>
    <name type="ordered locus">Glov_3589</name>
</gene>
<feature type="chain" id="PRO_1000128755" description="Large ribosomal subunit protein bL27">
    <location>
        <begin position="1"/>
        <end position="84"/>
    </location>
</feature>
<feature type="region of interest" description="Disordered" evidence="2">
    <location>
        <begin position="1"/>
        <end position="21"/>
    </location>
</feature>
<sequence length="84" mass="9209">MAHKKGVGSSRNGRDSDGQRLGCKKFGGELVKAGNIIYRQRGTQIHPGNNVGCGKDYTLFALIEGVVKFERLGRDRKKVSVYPS</sequence>
<organism>
    <name type="scientific">Trichlorobacter lovleyi (strain ATCC BAA-1151 / DSM 17278 / SZ)</name>
    <name type="common">Geobacter lovleyi</name>
    <dbReference type="NCBI Taxonomy" id="398767"/>
    <lineage>
        <taxon>Bacteria</taxon>
        <taxon>Pseudomonadati</taxon>
        <taxon>Thermodesulfobacteriota</taxon>
        <taxon>Desulfuromonadia</taxon>
        <taxon>Geobacterales</taxon>
        <taxon>Geobacteraceae</taxon>
        <taxon>Trichlorobacter</taxon>
    </lineage>
</organism>